<organism>
    <name type="scientific">Atropa belladonna</name>
    <name type="common">Belladonna</name>
    <name type="synonym">Deadly nightshade</name>
    <dbReference type="NCBI Taxonomy" id="33113"/>
    <lineage>
        <taxon>Eukaryota</taxon>
        <taxon>Viridiplantae</taxon>
        <taxon>Streptophyta</taxon>
        <taxon>Embryophyta</taxon>
        <taxon>Tracheophyta</taxon>
        <taxon>Spermatophyta</taxon>
        <taxon>Magnoliopsida</taxon>
        <taxon>eudicotyledons</taxon>
        <taxon>Gunneridae</taxon>
        <taxon>Pentapetalae</taxon>
        <taxon>asterids</taxon>
        <taxon>lamiids</taxon>
        <taxon>Solanales</taxon>
        <taxon>Solanaceae</taxon>
        <taxon>Solanoideae</taxon>
        <taxon>Hyoscyameae</taxon>
        <taxon>Atropa</taxon>
    </lineage>
</organism>
<protein>
    <recommendedName>
        <fullName evidence="1">Large ribosomal subunit protein bL36c</fullName>
    </recommendedName>
    <alternativeName>
        <fullName>50S ribosomal protein L36, chloroplastic</fullName>
    </alternativeName>
</protein>
<reference key="1">
    <citation type="journal article" date="2002" name="Mol. Biol. Evol.">
        <title>The plastid chromosome of Atropa belladonna and its comparison with that of Nicotiana tabacum: the role of RNA editing in generating divergence in the process of plant speciation.</title>
        <authorList>
            <person name="Schmitz-Linneweber C."/>
            <person name="Regel R."/>
            <person name="Du T.G."/>
            <person name="Hupfer H."/>
            <person name="Herrmann R.G."/>
            <person name="Maier R.M."/>
        </authorList>
    </citation>
    <scope>NUCLEOTIDE SEQUENCE [LARGE SCALE GENOMIC DNA]</scope>
    <source>
        <strain>cv. Ab5p(kan)</strain>
    </source>
</reference>
<sequence length="37" mass="4460">MKIRASVRKICEKCRLIRRRGRIIVICSNPRHKQRQG</sequence>
<keyword id="KW-0150">Chloroplast</keyword>
<keyword id="KW-0934">Plastid</keyword>
<keyword id="KW-0687">Ribonucleoprotein</keyword>
<keyword id="KW-0689">Ribosomal protein</keyword>
<gene>
    <name type="primary">rpl36</name>
</gene>
<feature type="chain" id="PRO_0000126312" description="Large ribosomal subunit protein bL36c">
    <location>
        <begin position="1"/>
        <end position="37"/>
    </location>
</feature>
<evidence type="ECO:0000305" key="1"/>
<proteinExistence type="inferred from homology"/>
<geneLocation type="chloroplast"/>
<name>RK36_ATRBE</name>
<accession>P62119</accession>
<accession>P12144</accession>
<comment type="subcellular location">
    <subcellularLocation>
        <location>Plastid</location>
        <location>Chloroplast</location>
    </subcellularLocation>
</comment>
<comment type="similarity">
    <text evidence="1">Belongs to the bacterial ribosomal protein bL36 family.</text>
</comment>
<dbReference type="EMBL" id="AJ316582">
    <property type="protein sequence ID" value="CAC88078.1"/>
    <property type="molecule type" value="Genomic_DNA"/>
</dbReference>
<dbReference type="RefSeq" id="NP_783265.1">
    <property type="nucleotide sequence ID" value="NC_004561.1"/>
</dbReference>
<dbReference type="SMR" id="P62119"/>
<dbReference type="GeneID" id="806546"/>
<dbReference type="GO" id="GO:0009507">
    <property type="term" value="C:chloroplast"/>
    <property type="evidence" value="ECO:0007669"/>
    <property type="project" value="UniProtKB-SubCell"/>
</dbReference>
<dbReference type="GO" id="GO:1990904">
    <property type="term" value="C:ribonucleoprotein complex"/>
    <property type="evidence" value="ECO:0007669"/>
    <property type="project" value="UniProtKB-KW"/>
</dbReference>
<dbReference type="GO" id="GO:0005840">
    <property type="term" value="C:ribosome"/>
    <property type="evidence" value="ECO:0007669"/>
    <property type="project" value="UniProtKB-KW"/>
</dbReference>
<dbReference type="GO" id="GO:0003735">
    <property type="term" value="F:structural constituent of ribosome"/>
    <property type="evidence" value="ECO:0007669"/>
    <property type="project" value="InterPro"/>
</dbReference>
<dbReference type="GO" id="GO:0006412">
    <property type="term" value="P:translation"/>
    <property type="evidence" value="ECO:0007669"/>
    <property type="project" value="UniProtKB-UniRule"/>
</dbReference>
<dbReference type="HAMAP" id="MF_00251">
    <property type="entry name" value="Ribosomal_bL36"/>
    <property type="match status" value="1"/>
</dbReference>
<dbReference type="InterPro" id="IPR000473">
    <property type="entry name" value="Ribosomal_bL36"/>
</dbReference>
<dbReference type="InterPro" id="IPR035977">
    <property type="entry name" value="Ribosomal_bL36_sp"/>
</dbReference>
<dbReference type="NCBIfam" id="TIGR01022">
    <property type="entry name" value="rpmJ_bact"/>
    <property type="match status" value="1"/>
</dbReference>
<dbReference type="PANTHER" id="PTHR42888">
    <property type="entry name" value="50S RIBOSOMAL PROTEIN L36, CHLOROPLASTIC"/>
    <property type="match status" value="1"/>
</dbReference>
<dbReference type="PANTHER" id="PTHR42888:SF1">
    <property type="entry name" value="LARGE RIBOSOMAL SUBUNIT PROTEIN BL36C"/>
    <property type="match status" value="1"/>
</dbReference>
<dbReference type="Pfam" id="PF00444">
    <property type="entry name" value="Ribosomal_L36"/>
    <property type="match status" value="1"/>
</dbReference>
<dbReference type="SUPFAM" id="SSF57840">
    <property type="entry name" value="Ribosomal protein L36"/>
    <property type="match status" value="1"/>
</dbReference>
<dbReference type="PROSITE" id="PS00828">
    <property type="entry name" value="RIBOSOMAL_L36"/>
    <property type="match status" value="1"/>
</dbReference>